<feature type="chain" id="PRO_0000273797" description="Large ribosomal subunit protein uL30">
    <location>
        <begin position="1"/>
        <end position="63"/>
    </location>
</feature>
<accession>Q2S930</accession>
<proteinExistence type="inferred from homology"/>
<evidence type="ECO:0000255" key="1">
    <source>
        <dbReference type="HAMAP-Rule" id="MF_01371"/>
    </source>
</evidence>
<evidence type="ECO:0000305" key="2"/>
<reference key="1">
    <citation type="journal article" date="2005" name="Nucleic Acids Res.">
        <title>Genomic blueprint of Hahella chejuensis, a marine microbe producing an algicidal agent.</title>
        <authorList>
            <person name="Jeong H."/>
            <person name="Yim J.H."/>
            <person name="Lee C."/>
            <person name="Choi S.-H."/>
            <person name="Park Y.K."/>
            <person name="Yoon S.H."/>
            <person name="Hur C.-G."/>
            <person name="Kang H.-Y."/>
            <person name="Kim D."/>
            <person name="Lee H.H."/>
            <person name="Park K.H."/>
            <person name="Park S.-H."/>
            <person name="Park H.-S."/>
            <person name="Lee H.K."/>
            <person name="Oh T.K."/>
            <person name="Kim J.F."/>
        </authorList>
    </citation>
    <scope>NUCLEOTIDE SEQUENCE [LARGE SCALE GENOMIC DNA]</scope>
    <source>
        <strain>KCTC 2396</strain>
    </source>
</reference>
<name>RL30_HAHCH</name>
<organism>
    <name type="scientific">Hahella chejuensis (strain KCTC 2396)</name>
    <dbReference type="NCBI Taxonomy" id="349521"/>
    <lineage>
        <taxon>Bacteria</taxon>
        <taxon>Pseudomonadati</taxon>
        <taxon>Pseudomonadota</taxon>
        <taxon>Gammaproteobacteria</taxon>
        <taxon>Oceanospirillales</taxon>
        <taxon>Hahellaceae</taxon>
        <taxon>Hahella</taxon>
    </lineage>
</organism>
<comment type="subunit">
    <text evidence="1">Part of the 50S ribosomal subunit.</text>
</comment>
<comment type="similarity">
    <text evidence="1">Belongs to the universal ribosomal protein uL30 family.</text>
</comment>
<dbReference type="EMBL" id="CP000155">
    <property type="protein sequence ID" value="ABC32844.1"/>
    <property type="molecule type" value="Genomic_DNA"/>
</dbReference>
<dbReference type="RefSeq" id="WP_011399902.1">
    <property type="nucleotide sequence ID" value="NC_007645.1"/>
</dbReference>
<dbReference type="SMR" id="Q2S930"/>
<dbReference type="STRING" id="349521.HCH_10027"/>
<dbReference type="KEGG" id="hch:HCH_10027"/>
<dbReference type="eggNOG" id="COG1841">
    <property type="taxonomic scope" value="Bacteria"/>
</dbReference>
<dbReference type="HOGENOM" id="CLU_131047_1_4_6"/>
<dbReference type="OrthoDB" id="9812790at2"/>
<dbReference type="Proteomes" id="UP000000238">
    <property type="component" value="Chromosome"/>
</dbReference>
<dbReference type="GO" id="GO:0022625">
    <property type="term" value="C:cytosolic large ribosomal subunit"/>
    <property type="evidence" value="ECO:0007669"/>
    <property type="project" value="TreeGrafter"/>
</dbReference>
<dbReference type="GO" id="GO:0003735">
    <property type="term" value="F:structural constituent of ribosome"/>
    <property type="evidence" value="ECO:0007669"/>
    <property type="project" value="InterPro"/>
</dbReference>
<dbReference type="GO" id="GO:0006412">
    <property type="term" value="P:translation"/>
    <property type="evidence" value="ECO:0007669"/>
    <property type="project" value="UniProtKB-UniRule"/>
</dbReference>
<dbReference type="CDD" id="cd01658">
    <property type="entry name" value="Ribosomal_L30"/>
    <property type="match status" value="1"/>
</dbReference>
<dbReference type="FunFam" id="3.30.1390.20:FF:000001">
    <property type="entry name" value="50S ribosomal protein L30"/>
    <property type="match status" value="1"/>
</dbReference>
<dbReference type="Gene3D" id="3.30.1390.20">
    <property type="entry name" value="Ribosomal protein L30, ferredoxin-like fold domain"/>
    <property type="match status" value="1"/>
</dbReference>
<dbReference type="HAMAP" id="MF_01371_B">
    <property type="entry name" value="Ribosomal_uL30_B"/>
    <property type="match status" value="1"/>
</dbReference>
<dbReference type="InterPro" id="IPR036919">
    <property type="entry name" value="Ribo_uL30_ferredoxin-like_sf"/>
</dbReference>
<dbReference type="InterPro" id="IPR005996">
    <property type="entry name" value="Ribosomal_uL30_bac-type"/>
</dbReference>
<dbReference type="InterPro" id="IPR016082">
    <property type="entry name" value="Ribosomal_uL30_ferredoxin-like"/>
</dbReference>
<dbReference type="NCBIfam" id="TIGR01308">
    <property type="entry name" value="rpmD_bact"/>
    <property type="match status" value="1"/>
</dbReference>
<dbReference type="PANTHER" id="PTHR15892:SF2">
    <property type="entry name" value="LARGE RIBOSOMAL SUBUNIT PROTEIN UL30M"/>
    <property type="match status" value="1"/>
</dbReference>
<dbReference type="PANTHER" id="PTHR15892">
    <property type="entry name" value="MITOCHONDRIAL RIBOSOMAL PROTEIN L30"/>
    <property type="match status" value="1"/>
</dbReference>
<dbReference type="Pfam" id="PF00327">
    <property type="entry name" value="Ribosomal_L30"/>
    <property type="match status" value="1"/>
</dbReference>
<dbReference type="PIRSF" id="PIRSF002211">
    <property type="entry name" value="Ribosomal_L30_bac-type"/>
    <property type="match status" value="1"/>
</dbReference>
<dbReference type="SUPFAM" id="SSF55129">
    <property type="entry name" value="Ribosomal protein L30p/L7e"/>
    <property type="match status" value="1"/>
</dbReference>
<sequence length="63" mass="6872">MANAAKTIKVTLVKSTIGILPKHKDCVRGLGLRKINHTVEVEDTAAVRGMINKVNYLVKVEGE</sequence>
<gene>
    <name evidence="1" type="primary">rpmD</name>
    <name type="ordered locus">HCH_10027</name>
</gene>
<keyword id="KW-1185">Reference proteome</keyword>
<keyword id="KW-0687">Ribonucleoprotein</keyword>
<keyword id="KW-0689">Ribosomal protein</keyword>
<protein>
    <recommendedName>
        <fullName evidence="1">Large ribosomal subunit protein uL30</fullName>
    </recommendedName>
    <alternativeName>
        <fullName evidence="2">50S ribosomal protein L30</fullName>
    </alternativeName>
</protein>